<organism>
    <name type="scientific">Oryza sativa subsp. japonica</name>
    <name type="common">Rice</name>
    <dbReference type="NCBI Taxonomy" id="39947"/>
    <lineage>
        <taxon>Eukaryota</taxon>
        <taxon>Viridiplantae</taxon>
        <taxon>Streptophyta</taxon>
        <taxon>Embryophyta</taxon>
        <taxon>Tracheophyta</taxon>
        <taxon>Spermatophyta</taxon>
        <taxon>Magnoliopsida</taxon>
        <taxon>Liliopsida</taxon>
        <taxon>Poales</taxon>
        <taxon>Poaceae</taxon>
        <taxon>BOP clade</taxon>
        <taxon>Oryzoideae</taxon>
        <taxon>Oryzeae</taxon>
        <taxon>Oryzinae</taxon>
        <taxon>Oryza</taxon>
        <taxon>Oryza sativa</taxon>
    </lineage>
</organism>
<name>LAZY1_ORYSJ</name>
<proteinExistence type="evidence at transcript level"/>
<keyword id="KW-1003">Cell membrane</keyword>
<keyword id="KW-0341">Growth regulation</keyword>
<keyword id="KW-0472">Membrane</keyword>
<keyword id="KW-0539">Nucleus</keyword>
<keyword id="KW-1185">Reference proteome</keyword>
<keyword id="KW-0812">Transmembrane</keyword>
<keyword id="KW-1133">Transmembrane helix</keyword>
<evidence type="ECO:0000255" key="1"/>
<evidence type="ECO:0000256" key="2">
    <source>
        <dbReference type="SAM" id="MobiDB-lite"/>
    </source>
</evidence>
<evidence type="ECO:0000269" key="3">
    <source>
    </source>
</evidence>
<evidence type="ECO:0000269" key="4">
    <source>
    </source>
</evidence>
<evidence type="ECO:0000269" key="5">
    <source>
    </source>
</evidence>
<evidence type="ECO:0000269" key="6">
    <source>
    </source>
</evidence>
<evidence type="ECO:0000303" key="7">
    <source>
    </source>
</evidence>
<evidence type="ECO:0000305" key="8"/>
<evidence type="ECO:0000312" key="9">
    <source>
        <dbReference type="EMBL" id="ABA93814.2"/>
    </source>
</evidence>
<evidence type="ECO:0000312" key="10">
    <source>
        <dbReference type="EMBL" id="ABI34464.1"/>
    </source>
</evidence>
<evidence type="ECO:0000312" key="11">
    <source>
        <dbReference type="EMBL" id="BAF28289.1"/>
    </source>
</evidence>
<feature type="chain" id="PRO_0000437473" description="Protein LAZY 1">
    <location>
        <begin position="1"/>
        <end position="416"/>
    </location>
</feature>
<feature type="transmembrane region" description="Helical" evidence="1">
    <location>
        <begin position="63"/>
        <end position="83"/>
    </location>
</feature>
<feature type="region of interest" description="Disordered" evidence="2">
    <location>
        <begin position="266"/>
        <end position="306"/>
    </location>
</feature>
<feature type="region of interest" description="Disordered" evidence="2">
    <location>
        <begin position="337"/>
        <end position="361"/>
    </location>
</feature>
<feature type="short sequence motif" description="IGT motif" evidence="8">
    <location>
        <begin position="69"/>
        <end position="75"/>
    </location>
</feature>
<feature type="short sequence motif" description="Nuclear localization signal" evidence="1">
    <location>
        <begin position="278"/>
        <end position="295"/>
    </location>
</feature>
<feature type="compositionally biased region" description="Gly residues" evidence="2">
    <location>
        <begin position="270"/>
        <end position="282"/>
    </location>
</feature>
<sequence length="416" mass="42667">MKLLGWMHRKLRSNNDVFKEFNTGGGGACNCITGLASPDHDNDYFSGDDAAHASPPVTAGDLFTFGGSGLLTIGTLGIAAVAIPSGGDDDDYDIDFEVDATSDDDGGFTVEDDDADVGGAVTPTFTFPAATAAEAVVATVEKAVAAVEAIAEKDDDTTTEDDLMVVSAELEKVLGGVDVASARVSFAMGGGVDCPLQGFLFGSPVSDVESRPEYLQAPRDSSGSCGGGGRRTSLGELFMRTRFADEKVALVAVAEGEDGVAGDDGAAAAGVGGDRAGKGGGYKTMKKRKVKDEKGGGGAAGGGMPATVTKSKFQKILQIFHRKVYPENTLLTRNLTKKSRNRGATDNGGGAVATGDPDGPLASPVLRCRKDHPMRGFGCCTNGAFGASSPGGNAEMNGNKSGHWIKTDADYLVLEL</sequence>
<accession>Q2R435</accession>
<protein>
    <recommendedName>
        <fullName evidence="7">Protein LAZY 1</fullName>
    </recommendedName>
</protein>
<dbReference type="EMBL" id="DQ855268">
    <property type="protein sequence ID" value="ABI34464.1"/>
    <property type="molecule type" value="Genomic_DNA"/>
</dbReference>
<dbReference type="EMBL" id="DP000010">
    <property type="protein sequence ID" value="ABA93814.2"/>
    <property type="molecule type" value="Genomic_DNA"/>
</dbReference>
<dbReference type="EMBL" id="AP008217">
    <property type="protein sequence ID" value="BAF28289.1"/>
    <property type="molecule type" value="Genomic_DNA"/>
</dbReference>
<dbReference type="EMBL" id="AP014967">
    <property type="protein sequence ID" value="BAT14087.1"/>
    <property type="molecule type" value="Genomic_DNA"/>
</dbReference>
<dbReference type="EMBL" id="AK067664">
    <property type="status" value="NOT_ANNOTATED_CDS"/>
    <property type="molecule type" value="mRNA"/>
</dbReference>
<dbReference type="RefSeq" id="XP_015616691.1">
    <property type="nucleotide sequence ID" value="XM_015761205.1"/>
</dbReference>
<dbReference type="SMR" id="Q2R435"/>
<dbReference type="FunCoup" id="Q2R435">
    <property type="interactions" value="2660"/>
</dbReference>
<dbReference type="STRING" id="39947.Q2R435"/>
<dbReference type="PaxDb" id="39947-Q2R435"/>
<dbReference type="EnsemblPlants" id="Os11t0490600-01">
    <property type="protein sequence ID" value="Os11t0490600-01"/>
    <property type="gene ID" value="Os11g0490600"/>
</dbReference>
<dbReference type="Gramene" id="Os11t0490600-01">
    <property type="protein sequence ID" value="Os11t0490600-01"/>
    <property type="gene ID" value="Os11g0490600"/>
</dbReference>
<dbReference type="KEGG" id="dosa:Os11g0490600"/>
<dbReference type="eggNOG" id="ENOG502QRWV">
    <property type="taxonomic scope" value="Eukaryota"/>
</dbReference>
<dbReference type="HOGENOM" id="CLU_061468_0_0_1"/>
<dbReference type="InParanoid" id="Q2R435"/>
<dbReference type="OMA" id="CTCLTGQ"/>
<dbReference type="OrthoDB" id="780166at2759"/>
<dbReference type="PlantReactome" id="R-OSA-9826782">
    <property type="pathway name" value="Regulation of seed germination and coleoptile growth under submergence and normal gravity environment"/>
</dbReference>
<dbReference type="Proteomes" id="UP000000763">
    <property type="component" value="Chromosome 11"/>
</dbReference>
<dbReference type="Proteomes" id="UP000059680">
    <property type="component" value="Chromosome 11"/>
</dbReference>
<dbReference type="ExpressionAtlas" id="Q2R435">
    <property type="expression patterns" value="baseline and differential"/>
</dbReference>
<dbReference type="GO" id="GO:0005634">
    <property type="term" value="C:nucleus"/>
    <property type="evidence" value="ECO:0000314"/>
    <property type="project" value="UniProtKB"/>
</dbReference>
<dbReference type="GO" id="GO:0005886">
    <property type="term" value="C:plasma membrane"/>
    <property type="evidence" value="ECO:0000314"/>
    <property type="project" value="UniProtKB"/>
</dbReference>
<dbReference type="GO" id="GO:0009630">
    <property type="term" value="P:gravitropism"/>
    <property type="evidence" value="ECO:0007669"/>
    <property type="project" value="InterPro"/>
</dbReference>
<dbReference type="GO" id="GO:2000012">
    <property type="term" value="P:regulation of auxin polar transport"/>
    <property type="evidence" value="ECO:0000315"/>
    <property type="project" value="UniProtKB"/>
</dbReference>
<dbReference type="InterPro" id="IPR038928">
    <property type="entry name" value="LAZY1"/>
</dbReference>
<dbReference type="PANTHER" id="PTHR34959">
    <property type="entry name" value="PROTEIN LAZY 1"/>
    <property type="match status" value="1"/>
</dbReference>
<dbReference type="PANTHER" id="PTHR34959:SF3">
    <property type="entry name" value="PROTEIN LAZY 1"/>
    <property type="match status" value="1"/>
</dbReference>
<gene>
    <name evidence="7" type="primary">LA1</name>
    <name evidence="10" type="synonym">LA</name>
    <name evidence="11" type="ordered locus">Os11g0490600</name>
    <name evidence="9" type="ordered locus">LOC_Os11g29840</name>
</gene>
<comment type="function">
    <text evidence="3 4 5 6">Involved in the regulation of shoot gravitropism and tiller angle through negative regulation of basipetal polar auxin transport (PAT) (PubMed:17412736, PubMed:17468779, PubMed:25028496). Acts as positive regulator of lateral auxin transport (PubMed:17412736, PubMed:17468779, PubMed:25028496). Promotes vertical shoot growth (PubMed:17908158). LAZY1 and TAC1 play opposite functions in the regulation of tiller growth angle (PubMed:17908158).</text>
</comment>
<comment type="subcellular location">
    <subcellularLocation>
        <location evidence="4">Cell membrane</location>
        <topology evidence="1">Single-pass membrane protein</topology>
    </subcellularLocation>
    <subcellularLocation>
        <location evidence="4">Nucleus</location>
    </subcellularLocation>
</comment>
<comment type="tissue specificity">
    <text evidence="3 4">Expressed specifically in the cells at the inner side of the vascular bundles of young leaf sheaths and peripheral cylinders of vascular bundles in the unelongated stems (PubMed:17468779). Expressed in the leaf sheath pulvinus and the lamina joint (PubMed:17412736).</text>
</comment>
<comment type="disruption phenotype">
    <text evidence="3 4 6">Tiller-spreading phenotype due to defective shoot and tiller gravitropism. Extremely larger leaf angle at reproductive stage. Altered endogenous auxin distribution in shoots.</text>
</comment>
<comment type="similarity">
    <text evidence="8">Belongs to the LAZY family.</text>
</comment>
<reference key="1">
    <citation type="journal article" date="2007" name="Cell Res.">
        <title>LAZY1 controls rice shoot gravitropism through regulating polar auxin transport.</title>
        <authorList>
            <person name="Li P."/>
            <person name="Wang Y."/>
            <person name="Qian Q."/>
            <person name="Fu Z."/>
            <person name="Wang M."/>
            <person name="Zeng D."/>
            <person name="Li B."/>
            <person name="Wang X."/>
            <person name="Li J."/>
        </authorList>
    </citation>
    <scope>NUCLEOTIDE SEQUENCE [GENOMIC DNA]</scope>
    <scope>FUNCTION</scope>
    <scope>SUBCELLULAR LOCATION</scope>
    <scope>TISSUE SPECIFICITY</scope>
    <scope>DISRUPTION PHENOTYPE</scope>
</reference>
<reference key="2">
    <citation type="journal article" date="2005" name="BMC Biol.">
        <title>The sequence of rice chromosomes 11 and 12, rich in disease resistance genes and recent gene duplications.</title>
        <authorList>
            <consortium name="The rice chromosomes 11 and 12 sequencing consortia"/>
        </authorList>
    </citation>
    <scope>NUCLEOTIDE SEQUENCE [LARGE SCALE GENOMIC DNA]</scope>
    <source>
        <strain>cv. Nipponbare</strain>
    </source>
</reference>
<reference key="3">
    <citation type="journal article" date="2005" name="Nature">
        <title>The map-based sequence of the rice genome.</title>
        <authorList>
            <consortium name="International rice genome sequencing project (IRGSP)"/>
        </authorList>
    </citation>
    <scope>NUCLEOTIDE SEQUENCE [LARGE SCALE GENOMIC DNA]</scope>
    <source>
        <strain>cv. Nipponbare</strain>
    </source>
</reference>
<reference key="4">
    <citation type="journal article" date="2008" name="Nucleic Acids Res.">
        <title>The rice annotation project database (RAP-DB): 2008 update.</title>
        <authorList>
            <consortium name="The rice annotation project (RAP)"/>
        </authorList>
    </citation>
    <scope>GENOME REANNOTATION</scope>
    <source>
        <strain>cv. Nipponbare</strain>
    </source>
</reference>
<reference key="5">
    <citation type="journal article" date="2013" name="Rice">
        <title>Improvement of the Oryza sativa Nipponbare reference genome using next generation sequence and optical map data.</title>
        <authorList>
            <person name="Kawahara Y."/>
            <person name="de la Bastide M."/>
            <person name="Hamilton J.P."/>
            <person name="Kanamori H."/>
            <person name="McCombie W.R."/>
            <person name="Ouyang S."/>
            <person name="Schwartz D.C."/>
            <person name="Tanaka T."/>
            <person name="Wu J."/>
            <person name="Zhou S."/>
            <person name="Childs K.L."/>
            <person name="Davidson R.M."/>
            <person name="Lin H."/>
            <person name="Quesada-Ocampo L."/>
            <person name="Vaillancourt B."/>
            <person name="Sakai H."/>
            <person name="Lee S.S."/>
            <person name="Kim J."/>
            <person name="Numa H."/>
            <person name="Itoh T."/>
            <person name="Buell C.R."/>
            <person name="Matsumoto T."/>
        </authorList>
    </citation>
    <scope>GENOME REANNOTATION</scope>
    <source>
        <strain>cv. Nipponbare</strain>
    </source>
</reference>
<reference key="6">
    <citation type="journal article" date="2003" name="Science">
        <title>Collection, mapping, and annotation of over 28,000 cDNA clones from japonica rice.</title>
        <authorList>
            <consortium name="The rice full-length cDNA consortium"/>
        </authorList>
    </citation>
    <scope>NUCLEOTIDE SEQUENCE [LARGE SCALE MRNA]</scope>
    <source>
        <strain>cv. Nipponbare</strain>
    </source>
</reference>
<reference key="7">
    <citation type="journal article" date="2007" name="Plant Cell Physiol.">
        <title>Identification of the gravitropism-related rice gene LAZY1 and elucidation of LAZY1-dependent and -independent gravity signaling pathways.</title>
        <authorList>
            <person name="Yoshihara T."/>
            <person name="Iino M."/>
        </authorList>
    </citation>
    <scope>FUNCTION</scope>
    <scope>TISSUE SPECIFICITY</scope>
    <scope>DISRUPTION PHENOTYPE</scope>
    <source>
        <strain>cv. Shiokari</strain>
    </source>
</reference>
<reference key="8">
    <citation type="journal article" date="2007" name="Plant J.">
        <title>TAC1, a major quantitative trait locus controlling tiller angle in rice.</title>
        <authorList>
            <person name="Yu B."/>
            <person name="Lin Z."/>
            <person name="Li H."/>
            <person name="Li X."/>
            <person name="Li J."/>
            <person name="Wang Y."/>
            <person name="Zhang X."/>
            <person name="Zhu Z."/>
            <person name="Zhai W."/>
            <person name="Wang X."/>
            <person name="Xie D."/>
            <person name="Sun C."/>
        </authorList>
    </citation>
    <scope>FUNCTION</scope>
</reference>
<reference key="9">
    <citation type="journal article" date="2014" name="Proc. Natl. Acad. Sci. U.S.A.">
        <title>Strigolactones regulate rice tiller angle by attenuating shoot gravitropism through inhibiting auxin biosynthesis.</title>
        <authorList>
            <person name="Sang D."/>
            <person name="Chen D."/>
            <person name="Liu G."/>
            <person name="Liang Y."/>
            <person name="Huang L."/>
            <person name="Meng X."/>
            <person name="Chu J."/>
            <person name="Sun X."/>
            <person name="Dong G."/>
            <person name="Yuan Y."/>
            <person name="Qian Q."/>
            <person name="Li J."/>
            <person name="Wang Y."/>
        </authorList>
    </citation>
    <scope>FUNCTION</scope>
    <scope>DISRUPTION PHENOTYPE</scope>
</reference>